<evidence type="ECO:0000255" key="1">
    <source>
        <dbReference type="HAMAP-Rule" id="MF_00815"/>
    </source>
</evidence>
<organism>
    <name type="scientific">Pseudomonas fluorescens (strain SBW25)</name>
    <dbReference type="NCBI Taxonomy" id="216595"/>
    <lineage>
        <taxon>Bacteria</taxon>
        <taxon>Pseudomonadati</taxon>
        <taxon>Pseudomonadota</taxon>
        <taxon>Gammaproteobacteria</taxon>
        <taxon>Pseudomonadales</taxon>
        <taxon>Pseudomonadaceae</taxon>
        <taxon>Pseudomonas</taxon>
    </lineage>
</organism>
<keyword id="KW-0066">ATP synthesis</keyword>
<keyword id="KW-0997">Cell inner membrane</keyword>
<keyword id="KW-1003">Cell membrane</keyword>
<keyword id="KW-0139">CF(1)</keyword>
<keyword id="KW-0375">Hydrogen ion transport</keyword>
<keyword id="KW-0406">Ion transport</keyword>
<keyword id="KW-0472">Membrane</keyword>
<keyword id="KW-0813">Transport</keyword>
<sequence length="286" mass="31394">MAGAKEIRSKIASIKSTQKITSAMEKVAVSKMRKAQMRMAASRPYAERIRQVIGHLANANPEYRHPFMIERAVKRVGYVVVSSDRGLCGGLNTNLFKALVKDMAVNRENGVEIDLCVVGSKGAAFFRNFGGNVVAAISHLGEEPSINDLIGSVKVMLDAYLEGRIDRLSVVSNKFINTMTQQPTVEQLIPLVATPDQELKHHWDYLYEPDAKELLDGLMVRYVESQVYQAVVENNAAEQAARMIAMKNATDNAGDLISDLQLIYNKARQAAITQEISEIVGGAAAV</sequence>
<gene>
    <name evidence="1" type="primary">atpG</name>
    <name type="ordered locus">PFLU_6119</name>
</gene>
<comment type="function">
    <text evidence="1">Produces ATP from ADP in the presence of a proton gradient across the membrane. The gamma chain is believed to be important in regulating ATPase activity and the flow of protons through the CF(0) complex.</text>
</comment>
<comment type="subunit">
    <text evidence="1">F-type ATPases have 2 components, CF(1) - the catalytic core - and CF(0) - the membrane proton channel. CF(1) has five subunits: alpha(3), beta(3), gamma(1), delta(1), epsilon(1). CF(0) has three main subunits: a, b and c.</text>
</comment>
<comment type="subcellular location">
    <subcellularLocation>
        <location evidence="1">Cell inner membrane</location>
        <topology evidence="1">Peripheral membrane protein</topology>
    </subcellularLocation>
</comment>
<comment type="similarity">
    <text evidence="1">Belongs to the ATPase gamma chain family.</text>
</comment>
<feature type="chain" id="PRO_1000213044" description="ATP synthase gamma chain">
    <location>
        <begin position="1"/>
        <end position="286"/>
    </location>
</feature>
<dbReference type="EMBL" id="AM181176">
    <property type="protein sequence ID" value="CAY53726.1"/>
    <property type="molecule type" value="Genomic_DNA"/>
</dbReference>
<dbReference type="RefSeq" id="WP_003195829.1">
    <property type="nucleotide sequence ID" value="NC_012660.1"/>
</dbReference>
<dbReference type="SMR" id="C3K1E7"/>
<dbReference type="STRING" id="294.SRM1_00042"/>
<dbReference type="GeneID" id="93467750"/>
<dbReference type="eggNOG" id="COG0224">
    <property type="taxonomic scope" value="Bacteria"/>
</dbReference>
<dbReference type="HOGENOM" id="CLU_050669_0_1_6"/>
<dbReference type="OrthoDB" id="9812769at2"/>
<dbReference type="GO" id="GO:0005886">
    <property type="term" value="C:plasma membrane"/>
    <property type="evidence" value="ECO:0007669"/>
    <property type="project" value="UniProtKB-SubCell"/>
</dbReference>
<dbReference type="GO" id="GO:0045259">
    <property type="term" value="C:proton-transporting ATP synthase complex"/>
    <property type="evidence" value="ECO:0007669"/>
    <property type="project" value="UniProtKB-KW"/>
</dbReference>
<dbReference type="GO" id="GO:0005524">
    <property type="term" value="F:ATP binding"/>
    <property type="evidence" value="ECO:0007669"/>
    <property type="project" value="UniProtKB-UniRule"/>
</dbReference>
<dbReference type="GO" id="GO:0046933">
    <property type="term" value="F:proton-transporting ATP synthase activity, rotational mechanism"/>
    <property type="evidence" value="ECO:0007669"/>
    <property type="project" value="UniProtKB-UniRule"/>
</dbReference>
<dbReference type="GO" id="GO:0042777">
    <property type="term" value="P:proton motive force-driven plasma membrane ATP synthesis"/>
    <property type="evidence" value="ECO:0007669"/>
    <property type="project" value="UniProtKB-UniRule"/>
</dbReference>
<dbReference type="CDD" id="cd12151">
    <property type="entry name" value="F1-ATPase_gamma"/>
    <property type="match status" value="1"/>
</dbReference>
<dbReference type="FunFam" id="1.10.287.80:FF:000005">
    <property type="entry name" value="ATP synthase gamma chain"/>
    <property type="match status" value="1"/>
</dbReference>
<dbReference type="FunFam" id="3.40.1380.10:FF:000001">
    <property type="entry name" value="ATP synthase gamma chain"/>
    <property type="match status" value="1"/>
</dbReference>
<dbReference type="Gene3D" id="3.40.1380.10">
    <property type="match status" value="1"/>
</dbReference>
<dbReference type="Gene3D" id="1.10.287.80">
    <property type="entry name" value="ATP synthase, gamma subunit, helix hairpin domain"/>
    <property type="match status" value="1"/>
</dbReference>
<dbReference type="HAMAP" id="MF_00815">
    <property type="entry name" value="ATP_synth_gamma_bact"/>
    <property type="match status" value="1"/>
</dbReference>
<dbReference type="InterPro" id="IPR035968">
    <property type="entry name" value="ATP_synth_F1_ATPase_gsu"/>
</dbReference>
<dbReference type="InterPro" id="IPR000131">
    <property type="entry name" value="ATP_synth_F1_gsu"/>
</dbReference>
<dbReference type="InterPro" id="IPR023632">
    <property type="entry name" value="ATP_synth_F1_gsu_CS"/>
</dbReference>
<dbReference type="NCBIfam" id="TIGR01146">
    <property type="entry name" value="ATPsyn_F1gamma"/>
    <property type="match status" value="1"/>
</dbReference>
<dbReference type="NCBIfam" id="NF004144">
    <property type="entry name" value="PRK05621.1-1"/>
    <property type="match status" value="1"/>
</dbReference>
<dbReference type="PANTHER" id="PTHR11693">
    <property type="entry name" value="ATP SYNTHASE GAMMA CHAIN"/>
    <property type="match status" value="1"/>
</dbReference>
<dbReference type="PANTHER" id="PTHR11693:SF22">
    <property type="entry name" value="ATP SYNTHASE SUBUNIT GAMMA, MITOCHONDRIAL"/>
    <property type="match status" value="1"/>
</dbReference>
<dbReference type="Pfam" id="PF00231">
    <property type="entry name" value="ATP-synt"/>
    <property type="match status" value="1"/>
</dbReference>
<dbReference type="PRINTS" id="PR00126">
    <property type="entry name" value="ATPASEGAMMA"/>
</dbReference>
<dbReference type="SUPFAM" id="SSF52943">
    <property type="entry name" value="ATP synthase (F1-ATPase), gamma subunit"/>
    <property type="match status" value="1"/>
</dbReference>
<dbReference type="PROSITE" id="PS00153">
    <property type="entry name" value="ATPASE_GAMMA"/>
    <property type="match status" value="1"/>
</dbReference>
<accession>C3K1E7</accession>
<name>ATPG_PSEFS</name>
<protein>
    <recommendedName>
        <fullName evidence="1">ATP synthase gamma chain</fullName>
    </recommendedName>
    <alternativeName>
        <fullName evidence="1">ATP synthase F1 sector gamma subunit</fullName>
    </alternativeName>
    <alternativeName>
        <fullName evidence="1">F-ATPase gamma subunit</fullName>
    </alternativeName>
</protein>
<reference key="1">
    <citation type="journal article" date="2009" name="Genome Biol.">
        <title>Genomic and genetic analyses of diversity and plant interactions of Pseudomonas fluorescens.</title>
        <authorList>
            <person name="Silby M.W."/>
            <person name="Cerdeno-Tarraga A.M."/>
            <person name="Vernikos G.S."/>
            <person name="Giddens S.R."/>
            <person name="Jackson R.W."/>
            <person name="Preston G.M."/>
            <person name="Zhang X.-X."/>
            <person name="Moon C.D."/>
            <person name="Gehrig S.M."/>
            <person name="Godfrey S.A.C."/>
            <person name="Knight C.G."/>
            <person name="Malone J.G."/>
            <person name="Robinson Z."/>
            <person name="Spiers A.J."/>
            <person name="Harris S."/>
            <person name="Challis G.L."/>
            <person name="Yaxley A.M."/>
            <person name="Harris D."/>
            <person name="Seeger K."/>
            <person name="Murphy L."/>
            <person name="Rutter S."/>
            <person name="Squares R."/>
            <person name="Quail M.A."/>
            <person name="Saunders E."/>
            <person name="Mavromatis K."/>
            <person name="Brettin T.S."/>
            <person name="Bentley S.D."/>
            <person name="Hothersall J."/>
            <person name="Stephens E."/>
            <person name="Thomas C.M."/>
            <person name="Parkhill J."/>
            <person name="Levy S.B."/>
            <person name="Rainey P.B."/>
            <person name="Thomson N.R."/>
        </authorList>
    </citation>
    <scope>NUCLEOTIDE SEQUENCE [LARGE SCALE GENOMIC DNA]</scope>
    <source>
        <strain>SBW25</strain>
    </source>
</reference>
<proteinExistence type="inferred from homology"/>